<gene>
    <name type="primary">yebF</name>
    <name type="ordered locus">b1847</name>
    <name type="ordered locus">JW1836</name>
</gene>
<dbReference type="EMBL" id="L20897">
    <property type="protein sequence ID" value="AAA23859.1"/>
    <property type="status" value="ALT_INIT"/>
    <property type="molecule type" value="Genomic_DNA"/>
</dbReference>
<dbReference type="EMBL" id="U00096">
    <property type="protein sequence ID" value="AAC74917.2"/>
    <property type="molecule type" value="Genomic_DNA"/>
</dbReference>
<dbReference type="EMBL" id="AP009048">
    <property type="protein sequence ID" value="BAA15653.1"/>
    <property type="status" value="ALT_INIT"/>
    <property type="molecule type" value="Genomic_DNA"/>
</dbReference>
<dbReference type="PIR" id="G64946">
    <property type="entry name" value="G64946"/>
</dbReference>
<dbReference type="RefSeq" id="NP_416361.2">
    <property type="nucleotide sequence ID" value="NC_000913.3"/>
</dbReference>
<dbReference type="RefSeq" id="WP_001350516.1">
    <property type="nucleotide sequence ID" value="NZ_LN832404.1"/>
</dbReference>
<dbReference type="PDB" id="2LQV">
    <property type="method" value="NMR"/>
    <property type="chains" value="A=22-118"/>
</dbReference>
<dbReference type="PDBsum" id="2LQV"/>
<dbReference type="BMRB" id="P33219"/>
<dbReference type="SMR" id="P33219"/>
<dbReference type="BioGRID" id="4263507">
    <property type="interactions" value="4"/>
</dbReference>
<dbReference type="FunCoup" id="P33219">
    <property type="interactions" value="24"/>
</dbReference>
<dbReference type="STRING" id="511145.b1847"/>
<dbReference type="jPOST" id="P33219"/>
<dbReference type="PaxDb" id="511145-b1847"/>
<dbReference type="EnsemblBacteria" id="AAC74917">
    <property type="protein sequence ID" value="AAC74917"/>
    <property type="gene ID" value="b1847"/>
</dbReference>
<dbReference type="GeneID" id="946363"/>
<dbReference type="KEGG" id="ecj:JW1836"/>
<dbReference type="KEGG" id="eco:b1847"/>
<dbReference type="KEGG" id="ecoc:C3026_10525"/>
<dbReference type="PATRIC" id="fig|1411691.4.peg.402"/>
<dbReference type="EchoBASE" id="EB1755"/>
<dbReference type="eggNOG" id="ENOG5031MN2">
    <property type="taxonomic scope" value="Bacteria"/>
</dbReference>
<dbReference type="HOGENOM" id="CLU_161319_1_0_6"/>
<dbReference type="InParanoid" id="P33219"/>
<dbReference type="OrthoDB" id="6454940at2"/>
<dbReference type="PhylomeDB" id="P33219"/>
<dbReference type="BioCyc" id="EcoCyc:EG11807-MONOMER"/>
<dbReference type="EvolutionaryTrace" id="P33219"/>
<dbReference type="PRO" id="PR:P33219"/>
<dbReference type="Proteomes" id="UP000000625">
    <property type="component" value="Chromosome"/>
</dbReference>
<dbReference type="GO" id="GO:0005576">
    <property type="term" value="C:extracellular region"/>
    <property type="evidence" value="ECO:0007669"/>
    <property type="project" value="UniProtKB-SubCell"/>
</dbReference>
<dbReference type="Gene3D" id="3.10.450.300">
    <property type="entry name" value="YebF/Colicin-M immunity protein"/>
    <property type="match status" value="1"/>
</dbReference>
<dbReference type="HAMAP" id="MF_01435">
    <property type="entry name" value="YebF"/>
    <property type="match status" value="1"/>
</dbReference>
<dbReference type="InterPro" id="IPR020236">
    <property type="entry name" value="Uncharacterised_YebF"/>
</dbReference>
<dbReference type="InterPro" id="IPR038703">
    <property type="entry name" value="YebF/Cmi_sf"/>
</dbReference>
<dbReference type="InterPro" id="IPR025603">
    <property type="entry name" value="YebF/ColM_immunity"/>
</dbReference>
<dbReference type="NCBIfam" id="NF010224">
    <property type="entry name" value="PRK13680.1"/>
    <property type="match status" value="1"/>
</dbReference>
<dbReference type="NCBIfam" id="NF041240">
    <property type="entry name" value="YebF_not_Cmi"/>
    <property type="match status" value="1"/>
</dbReference>
<dbReference type="Pfam" id="PF13995">
    <property type="entry name" value="YebF"/>
    <property type="match status" value="1"/>
</dbReference>
<dbReference type="PROSITE" id="PS51979">
    <property type="entry name" value="YEBF_CMI"/>
    <property type="match status" value="1"/>
</dbReference>
<protein>
    <recommendedName>
        <fullName evidence="5">Protein YebF</fullName>
    </recommendedName>
</protein>
<evidence type="ECO:0000255" key="1">
    <source>
        <dbReference type="HAMAP-Rule" id="MF_01435"/>
    </source>
</evidence>
<evidence type="ECO:0000255" key="2">
    <source>
        <dbReference type="PROSITE-ProRule" id="PRU01323"/>
    </source>
</evidence>
<evidence type="ECO:0000269" key="3">
    <source>
    </source>
</evidence>
<evidence type="ECO:0000269" key="4">
    <source>
    </source>
</evidence>
<evidence type="ECO:0000305" key="5"/>
<evidence type="ECO:0000305" key="6">
    <source>
    </source>
</evidence>
<evidence type="ECO:0007744" key="7">
    <source>
        <dbReference type="PDB" id="2LQV"/>
    </source>
</evidence>
<evidence type="ECO:0007829" key="8">
    <source>
        <dbReference type="PDB" id="2LQV"/>
    </source>
</evidence>
<keyword id="KW-0002">3D-structure</keyword>
<keyword id="KW-0903">Direct protein sequencing</keyword>
<keyword id="KW-1015">Disulfide bond</keyword>
<keyword id="KW-1185">Reference proteome</keyword>
<keyword id="KW-0964">Secreted</keyword>
<keyword id="KW-0732">Signal</keyword>
<accession>P33219</accession>
<feature type="signal peptide" evidence="3">
    <location>
        <begin position="1"/>
        <end position="21"/>
    </location>
</feature>
<feature type="chain" id="PRO_0000045946" description="Protein YebF">
    <location>
        <begin position="22"/>
        <end position="118"/>
    </location>
</feature>
<feature type="domain" description="YebF/Cmi" evidence="2">
    <location>
        <begin position="31"/>
        <end position="118"/>
    </location>
</feature>
<feature type="region of interest" description="Dynamic loop1" evidence="6">
    <location>
        <begin position="53"/>
        <end position="74"/>
    </location>
</feature>
<feature type="region of interest" description="Dynamic loop2" evidence="6">
    <location>
        <begin position="91"/>
        <end position="103"/>
    </location>
</feature>
<feature type="disulfide bond" evidence="2 4 7">
    <location>
        <begin position="35"/>
        <end position="108"/>
    </location>
</feature>
<feature type="mutagenesis site" description="Lack of YebF secretion." evidence="4">
    <original>C</original>
    <variation>A</variation>
    <location>
        <position position="35"/>
    </location>
</feature>
<feature type="mutagenesis site" description="90% reduction in levels of YebF secretion." evidence="4">
    <original>RWADD</original>
    <variation>AAADA</variation>
    <location>
        <begin position="58"/>
        <end position="62"/>
    </location>
</feature>
<feature type="mutagenesis site" description="80% reduction in levels of YebF secretion; when associated with A-66 and A-92." evidence="4">
    <original>K</original>
    <variation>A</variation>
    <location>
        <position position="64"/>
    </location>
</feature>
<feature type="mutagenesis site" description="80% reduction in levels of YebF secretion; when associated with A-64 and A-92." evidence="4">
    <original>V</original>
    <variation>A</variation>
    <location>
        <position position="66"/>
    </location>
</feature>
<feature type="mutagenesis site" description="Slight decrease in levels of YebF secretion." evidence="4">
    <original>QD</original>
    <variation>AA</variation>
    <location>
        <begin position="78"/>
        <end position="79"/>
    </location>
</feature>
<feature type="mutagenesis site" description="Slight decrease in levels of YebF secretion." evidence="4">
    <original>DK</original>
    <variation>AA</variation>
    <location>
        <begin position="85"/>
        <end position="86"/>
    </location>
</feature>
<feature type="mutagenesis site" description="80% reduction in levels of YebF secretion; when associated with A-64 and A-66." evidence="4">
    <original>T</original>
    <variation>A</variation>
    <location>
        <position position="92"/>
    </location>
</feature>
<feature type="mutagenesis site" description="Lack of YebF secretion." evidence="4">
    <original>C</original>
    <variation>A</variation>
    <location>
        <position position="108"/>
    </location>
</feature>
<feature type="helix" evidence="8">
    <location>
        <begin position="40"/>
        <end position="52"/>
    </location>
</feature>
<feature type="turn" evidence="8">
    <location>
        <begin position="53"/>
        <end position="57"/>
    </location>
</feature>
<feature type="helix" evidence="8">
    <location>
        <begin position="77"/>
        <end position="79"/>
    </location>
</feature>
<feature type="strand" evidence="8">
    <location>
        <begin position="81"/>
        <end position="83"/>
    </location>
</feature>
<feature type="strand" evidence="8">
    <location>
        <begin position="86"/>
        <end position="89"/>
    </location>
</feature>
<feature type="strand" evidence="8">
    <location>
        <begin position="92"/>
        <end position="97"/>
    </location>
</feature>
<feature type="strand" evidence="8">
    <location>
        <begin position="104"/>
        <end position="107"/>
    </location>
</feature>
<feature type="turn" evidence="8">
    <location>
        <begin position="108"/>
        <end position="111"/>
    </location>
</feature>
<feature type="strand" evidence="8">
    <location>
        <begin position="112"/>
        <end position="114"/>
    </location>
</feature>
<organism>
    <name type="scientific">Escherichia coli (strain K12)</name>
    <dbReference type="NCBI Taxonomy" id="83333"/>
    <lineage>
        <taxon>Bacteria</taxon>
        <taxon>Pseudomonadati</taxon>
        <taxon>Pseudomonadota</taxon>
        <taxon>Gammaproteobacteria</taxon>
        <taxon>Enterobacterales</taxon>
        <taxon>Enterobacteriaceae</taxon>
        <taxon>Escherichia</taxon>
    </lineage>
</organism>
<comment type="subunit">
    <text evidence="4">Monomer in solution (PubMed:22658749). Interacts with OmpF/OmpC at the periplasmic face of the membrane (PubMed:22658749).</text>
</comment>
<comment type="subcellular location">
    <subcellularLocation>
        <location evidence="3">Secreted</location>
    </subcellularLocation>
    <text evidence="4">The outer membrane proteins OmpF, OmpC and OmpX are involved in YebF export. OmpX may help target and load YebF onto the OmpF/OmpC porins.</text>
</comment>
<comment type="domain">
    <text evidence="4">Contains an ordered core and an extensive dynamic surface formed by two regions, dynamic loop1 and dynamic loop2. The core is stabilized by a disulfide and ressembles the cystatin family.</text>
</comment>
<comment type="similarity">
    <text evidence="1 5">Belongs to the YebF family.</text>
</comment>
<comment type="sequence caution" evidence="5">
    <conflict type="erroneous initiation">
        <sequence resource="EMBL-CDS" id="AAA23859"/>
    </conflict>
</comment>
<comment type="sequence caution" evidence="5">
    <conflict type="erroneous initiation">
        <sequence resource="EMBL-CDS" id="BAA15653"/>
    </conflict>
</comment>
<sequence length="118" mass="12962">MKKRGAFLGLLLVSACASVFAANNETSKSVTFPKCEDLDAAGIAASVKRDYQQNRVARWADDQKIVGQADPVAWVSLQDIQGKDDKWSVPLTVRGKSADIHYQVSVDCKAGMAEYQRR</sequence>
<reference key="1">
    <citation type="submission" date="1993-07" db="EMBL/GenBank/DDBJ databases">
        <title>Purine and one-carbon metabolism in Escherichia coli K12: DNA sequence of a second GAR transformylase.</title>
        <authorList>
            <person name="Smith J.M."/>
            <person name="Nygaard P."/>
        </authorList>
    </citation>
    <scope>NUCLEOTIDE SEQUENCE [GENOMIC DNA]</scope>
    <source>
        <strain>K12</strain>
    </source>
</reference>
<reference key="2">
    <citation type="journal article" date="1996" name="DNA Res.">
        <title>A 460-kb DNA sequence of the Escherichia coli K-12 genome corresponding to the 40.1-50.0 min region on the linkage map.</title>
        <authorList>
            <person name="Itoh T."/>
            <person name="Aiba H."/>
            <person name="Baba T."/>
            <person name="Fujita K."/>
            <person name="Hayashi K."/>
            <person name="Inada T."/>
            <person name="Isono K."/>
            <person name="Kasai H."/>
            <person name="Kimura S."/>
            <person name="Kitakawa M."/>
            <person name="Kitagawa M."/>
            <person name="Makino K."/>
            <person name="Miki T."/>
            <person name="Mizobuchi K."/>
            <person name="Mori H."/>
            <person name="Mori T."/>
            <person name="Motomura K."/>
            <person name="Nakade S."/>
            <person name="Nakamura Y."/>
            <person name="Nashimoto H."/>
            <person name="Nishio Y."/>
            <person name="Oshima T."/>
            <person name="Saito N."/>
            <person name="Sampei G."/>
            <person name="Seki Y."/>
            <person name="Sivasundaram S."/>
            <person name="Tagami H."/>
            <person name="Takeda J."/>
            <person name="Takemoto K."/>
            <person name="Wada C."/>
            <person name="Yamamoto Y."/>
            <person name="Horiuchi T."/>
        </authorList>
    </citation>
    <scope>NUCLEOTIDE SEQUENCE [LARGE SCALE GENOMIC DNA]</scope>
    <source>
        <strain>K12 / W3110 / ATCC 27325 / DSM 5911</strain>
    </source>
</reference>
<reference key="3">
    <citation type="journal article" date="1997" name="Science">
        <title>The complete genome sequence of Escherichia coli K-12.</title>
        <authorList>
            <person name="Blattner F.R."/>
            <person name="Plunkett G. III"/>
            <person name="Bloch C.A."/>
            <person name="Perna N.T."/>
            <person name="Burland V."/>
            <person name="Riley M."/>
            <person name="Collado-Vides J."/>
            <person name="Glasner J.D."/>
            <person name="Rode C.K."/>
            <person name="Mayhew G.F."/>
            <person name="Gregor J."/>
            <person name="Davis N.W."/>
            <person name="Kirkpatrick H.A."/>
            <person name="Goeden M.A."/>
            <person name="Rose D.J."/>
            <person name="Mau B."/>
            <person name="Shao Y."/>
        </authorList>
    </citation>
    <scope>NUCLEOTIDE SEQUENCE [LARGE SCALE GENOMIC DNA]</scope>
    <source>
        <strain>K12 / MG1655 / ATCC 47076</strain>
    </source>
</reference>
<reference key="4">
    <citation type="journal article" date="2006" name="Mol. Syst. Biol.">
        <title>Highly accurate genome sequences of Escherichia coli K-12 strains MG1655 and W3110.</title>
        <authorList>
            <person name="Hayashi K."/>
            <person name="Morooka N."/>
            <person name="Yamamoto Y."/>
            <person name="Fujita K."/>
            <person name="Isono K."/>
            <person name="Choi S."/>
            <person name="Ohtsubo E."/>
            <person name="Baba T."/>
            <person name="Wanner B.L."/>
            <person name="Mori H."/>
            <person name="Horiuchi T."/>
        </authorList>
    </citation>
    <scope>NUCLEOTIDE SEQUENCE [LARGE SCALE GENOMIC DNA]</scope>
    <source>
        <strain>K12 / W3110 / ATCC 27325 / DSM 5911</strain>
    </source>
</reference>
<reference key="5">
    <citation type="journal article" date="2006" name="Nat. Biotechnol.">
        <title>Extracellular accumulation of recombinant proteins fused to the carrier protein YebF in Escherichia coli.</title>
        <authorList>
            <person name="Zhang G."/>
            <person name="Brokx S."/>
            <person name="Weiner J.H."/>
        </authorList>
    </citation>
    <scope>PROTEIN SEQUENCE OF 22-31</scope>
    <scope>SUBCELLULAR LOCATION</scope>
    <source>
        <strain>ATCC 33694 / HB101</strain>
    </source>
</reference>
<reference evidence="7" key="6">
    <citation type="journal article" date="2012" name="Structure">
        <title>A protein export pathway involving Escherichia coli porins.</title>
        <authorList>
            <person name="Prehna G."/>
            <person name="Zhang G."/>
            <person name="Gong X."/>
            <person name="Duszyk M."/>
            <person name="Okon M."/>
            <person name="McIntosh L.P."/>
            <person name="Weiner J.H."/>
            <person name="Strynadka N.C."/>
        </authorList>
    </citation>
    <scope>STRUCTURE BY NMR OF 22-118</scope>
    <scope>DISULFIDE BOND</scope>
    <scope>SUBUNIT</scope>
    <scope>INTERACTION WITH OMPF AND OMPC</scope>
    <scope>SUBCELLULAR LOCATION</scope>
    <scope>DOMAIN</scope>
    <scope>MUTAGENESIS OF CYS-35; 58-ARG--ASP-62; LYS-64; VAL-66; 78-GLN-ASP-79; 85-ASP-LYS-86; THR-92 AND CYS-108</scope>
</reference>
<name>YEBF_ECOLI</name>
<proteinExistence type="evidence at protein level"/>